<protein>
    <recommendedName>
        <fullName evidence="1">Small ribosomal subunit protein uS2</fullName>
    </recommendedName>
    <alternativeName>
        <fullName evidence="2">30S ribosomal protein S2</fullName>
    </alternativeName>
</protein>
<dbReference type="EMBL" id="CP000911">
    <property type="protein sequence ID" value="ABY38260.1"/>
    <property type="molecule type" value="Genomic_DNA"/>
</dbReference>
<dbReference type="RefSeq" id="WP_002964289.1">
    <property type="nucleotide sequence ID" value="NC_010169.1"/>
</dbReference>
<dbReference type="SMR" id="B0CGV9"/>
<dbReference type="GeneID" id="97533588"/>
<dbReference type="KEGG" id="bmt:BSUIS_A1209"/>
<dbReference type="HOGENOM" id="CLU_040318_2_1_5"/>
<dbReference type="Proteomes" id="UP000008545">
    <property type="component" value="Chromosome I"/>
</dbReference>
<dbReference type="GO" id="GO:0022627">
    <property type="term" value="C:cytosolic small ribosomal subunit"/>
    <property type="evidence" value="ECO:0007669"/>
    <property type="project" value="TreeGrafter"/>
</dbReference>
<dbReference type="GO" id="GO:0003735">
    <property type="term" value="F:structural constituent of ribosome"/>
    <property type="evidence" value="ECO:0007669"/>
    <property type="project" value="InterPro"/>
</dbReference>
<dbReference type="GO" id="GO:0006412">
    <property type="term" value="P:translation"/>
    <property type="evidence" value="ECO:0007669"/>
    <property type="project" value="UniProtKB-UniRule"/>
</dbReference>
<dbReference type="CDD" id="cd01425">
    <property type="entry name" value="RPS2"/>
    <property type="match status" value="1"/>
</dbReference>
<dbReference type="FunFam" id="1.10.287.610:FF:000001">
    <property type="entry name" value="30S ribosomal protein S2"/>
    <property type="match status" value="1"/>
</dbReference>
<dbReference type="Gene3D" id="3.40.50.10490">
    <property type="entry name" value="Glucose-6-phosphate isomerase like protein, domain 1"/>
    <property type="match status" value="1"/>
</dbReference>
<dbReference type="Gene3D" id="1.10.287.610">
    <property type="entry name" value="Helix hairpin bin"/>
    <property type="match status" value="1"/>
</dbReference>
<dbReference type="HAMAP" id="MF_00291_B">
    <property type="entry name" value="Ribosomal_uS2_B"/>
    <property type="match status" value="1"/>
</dbReference>
<dbReference type="InterPro" id="IPR001865">
    <property type="entry name" value="Ribosomal_uS2"/>
</dbReference>
<dbReference type="InterPro" id="IPR005706">
    <property type="entry name" value="Ribosomal_uS2_bac/mit/plastid"/>
</dbReference>
<dbReference type="InterPro" id="IPR018130">
    <property type="entry name" value="Ribosomal_uS2_CS"/>
</dbReference>
<dbReference type="InterPro" id="IPR023591">
    <property type="entry name" value="Ribosomal_uS2_flav_dom_sf"/>
</dbReference>
<dbReference type="NCBIfam" id="TIGR01011">
    <property type="entry name" value="rpsB_bact"/>
    <property type="match status" value="1"/>
</dbReference>
<dbReference type="PANTHER" id="PTHR12534">
    <property type="entry name" value="30S RIBOSOMAL PROTEIN S2 PROKARYOTIC AND ORGANELLAR"/>
    <property type="match status" value="1"/>
</dbReference>
<dbReference type="PANTHER" id="PTHR12534:SF0">
    <property type="entry name" value="SMALL RIBOSOMAL SUBUNIT PROTEIN US2M"/>
    <property type="match status" value="1"/>
</dbReference>
<dbReference type="Pfam" id="PF00318">
    <property type="entry name" value="Ribosomal_S2"/>
    <property type="match status" value="1"/>
</dbReference>
<dbReference type="PRINTS" id="PR00395">
    <property type="entry name" value="RIBOSOMALS2"/>
</dbReference>
<dbReference type="SUPFAM" id="SSF52313">
    <property type="entry name" value="Ribosomal protein S2"/>
    <property type="match status" value="1"/>
</dbReference>
<dbReference type="PROSITE" id="PS00962">
    <property type="entry name" value="RIBOSOMAL_S2_1"/>
    <property type="match status" value="1"/>
</dbReference>
<dbReference type="PROSITE" id="PS00963">
    <property type="entry name" value="RIBOSOMAL_S2_2"/>
    <property type="match status" value="1"/>
</dbReference>
<feature type="chain" id="PRO_1000078870" description="Small ribosomal subunit protein uS2">
    <location>
        <begin position="1"/>
        <end position="256"/>
    </location>
</feature>
<name>RS2_BRUSI</name>
<keyword id="KW-0687">Ribonucleoprotein</keyword>
<keyword id="KW-0689">Ribosomal protein</keyword>
<gene>
    <name evidence="1" type="primary">rpsB</name>
    <name type="ordered locus">BSUIS_A1209</name>
</gene>
<proteinExistence type="inferred from homology"/>
<comment type="similarity">
    <text evidence="1">Belongs to the universal ribosomal protein uS2 family.</text>
</comment>
<evidence type="ECO:0000255" key="1">
    <source>
        <dbReference type="HAMAP-Rule" id="MF_00291"/>
    </source>
</evidence>
<evidence type="ECO:0000305" key="2"/>
<organism>
    <name type="scientific">Brucella suis (strain ATCC 23445 / NCTC 10510)</name>
    <dbReference type="NCBI Taxonomy" id="470137"/>
    <lineage>
        <taxon>Bacteria</taxon>
        <taxon>Pseudomonadati</taxon>
        <taxon>Pseudomonadota</taxon>
        <taxon>Alphaproteobacteria</taxon>
        <taxon>Hyphomicrobiales</taxon>
        <taxon>Brucellaceae</taxon>
        <taxon>Brucella/Ochrobactrum group</taxon>
        <taxon>Brucella</taxon>
    </lineage>
</organism>
<reference key="1">
    <citation type="submission" date="2007-12" db="EMBL/GenBank/DDBJ databases">
        <title>Brucella suis ATCC 23445 whole genome shotgun sequencing project.</title>
        <authorList>
            <person name="Setubal J.C."/>
            <person name="Bowns C."/>
            <person name="Boyle S."/>
            <person name="Crasta O.R."/>
            <person name="Czar M.J."/>
            <person name="Dharmanolla C."/>
            <person name="Gillespie J.J."/>
            <person name="Kenyon R.W."/>
            <person name="Lu J."/>
            <person name="Mane S."/>
            <person name="Mohapatra S."/>
            <person name="Nagrani S."/>
            <person name="Purkayastha A."/>
            <person name="Rajasimha H.K."/>
            <person name="Shallom J.M."/>
            <person name="Shallom S."/>
            <person name="Shukla M."/>
            <person name="Snyder E.E."/>
            <person name="Sobral B.W."/>
            <person name="Wattam A.R."/>
            <person name="Will R."/>
            <person name="Williams K."/>
            <person name="Yoo H."/>
            <person name="Bruce D."/>
            <person name="Detter C."/>
            <person name="Munk C."/>
            <person name="Brettin T.S."/>
        </authorList>
    </citation>
    <scope>NUCLEOTIDE SEQUENCE [LARGE SCALE GENOMIC DNA]</scope>
    <source>
        <strain>ATCC 23445 / NCTC 10510</strain>
    </source>
</reference>
<accession>B0CGV9</accession>
<sequence length="256" mass="27999">MALPDFSMRQLLEAGVHFGHQTHRWNPKMAPFIYGERNNIHILDLSQTVPLLNSALKVVSDTVARGGRVLFVGTKRQASDIIADAANRSAQYYVNARWLGGMMTNWKTISNSIQRLRKLDELLAGEAQGFTKKERLNLEREREKLDRALGGIKDMGSVPDLMFIIDTNKEAIAIQEAKRLGIPVVAVIDSNCDPDQIDYPIPGNDDAARAIALYCDLIARAALDGIARQQGAMGIDVGAQVEAPVEPALQAPAEGA</sequence>